<comment type="function">
    <text evidence="1">Catalyzes the ATP-dependent phosphorylation of L-homoserine to L-homoserine phosphate.</text>
</comment>
<comment type="catalytic activity">
    <reaction evidence="1">
        <text>L-homoserine + ATP = O-phospho-L-homoserine + ADP + H(+)</text>
        <dbReference type="Rhea" id="RHEA:13985"/>
        <dbReference type="ChEBI" id="CHEBI:15378"/>
        <dbReference type="ChEBI" id="CHEBI:30616"/>
        <dbReference type="ChEBI" id="CHEBI:57476"/>
        <dbReference type="ChEBI" id="CHEBI:57590"/>
        <dbReference type="ChEBI" id="CHEBI:456216"/>
        <dbReference type="EC" id="2.7.1.39"/>
    </reaction>
</comment>
<comment type="pathway">
    <text evidence="1">Amino-acid biosynthesis; L-threonine biosynthesis; L-threonine from L-aspartate: step 4/5.</text>
</comment>
<comment type="subcellular location">
    <subcellularLocation>
        <location evidence="1">Cytoplasm</location>
    </subcellularLocation>
</comment>
<comment type="similarity">
    <text evidence="1">Belongs to the GHMP kinase family. Homoserine kinase subfamily.</text>
</comment>
<organism>
    <name type="scientific">Thermus thermophilus (strain ATCC 27634 / DSM 579 / HB8)</name>
    <dbReference type="NCBI Taxonomy" id="300852"/>
    <lineage>
        <taxon>Bacteria</taxon>
        <taxon>Thermotogati</taxon>
        <taxon>Deinococcota</taxon>
        <taxon>Deinococci</taxon>
        <taxon>Thermales</taxon>
        <taxon>Thermaceae</taxon>
        <taxon>Thermus</taxon>
    </lineage>
</organism>
<evidence type="ECO:0000255" key="1">
    <source>
        <dbReference type="HAMAP-Rule" id="MF_00384"/>
    </source>
</evidence>
<feature type="chain" id="PRO_1000049191" description="Homoserine kinase">
    <location>
        <begin position="1"/>
        <end position="292"/>
    </location>
</feature>
<feature type="binding site" evidence="1">
    <location>
        <begin position="84"/>
        <end position="94"/>
    </location>
    <ligand>
        <name>ATP</name>
        <dbReference type="ChEBI" id="CHEBI:30616"/>
    </ligand>
</feature>
<protein>
    <recommendedName>
        <fullName evidence="1">Homoserine kinase</fullName>
        <shortName evidence="1">HK</shortName>
        <shortName evidence="1">HSK</shortName>
        <ecNumber evidence="1">2.7.1.39</ecNumber>
    </recommendedName>
</protein>
<gene>
    <name evidence="1" type="primary">thrB</name>
    <name type="ordered locus">TTHA1394</name>
</gene>
<reference key="1">
    <citation type="submission" date="2004-11" db="EMBL/GenBank/DDBJ databases">
        <title>Complete genome sequence of Thermus thermophilus HB8.</title>
        <authorList>
            <person name="Masui R."/>
            <person name="Kurokawa K."/>
            <person name="Nakagawa N."/>
            <person name="Tokunaga F."/>
            <person name="Koyama Y."/>
            <person name="Shibata T."/>
            <person name="Oshima T."/>
            <person name="Yokoyama S."/>
            <person name="Yasunaga T."/>
            <person name="Kuramitsu S."/>
        </authorList>
    </citation>
    <scope>NUCLEOTIDE SEQUENCE [LARGE SCALE GENOMIC DNA]</scope>
    <source>
        <strain>ATCC 27634 / DSM 579 / HB8</strain>
    </source>
</reference>
<accession>Q5SIH5</accession>
<proteinExistence type="inferred from homology"/>
<sequence length="292" mass="30690">MDLPRLYVPATLANLGSGFDALGVALDLYLEVEAHPAPEDAFLYEGEGHVEGTDNLIHEGYRAGMRALGLEPFPLRVRAFNPIPLARGMGSSSAALVAGVALADRLSGGRLGREGVFRVAAGLEGHPDNVAPAVYGGFVAALSDPPLAIPLPRPEGVRFVLAVPPYEVPTPLAREALPREVPLEDAIYNLARSALWPAALSSGRLEALREACRDRLHQPHRAHLMPGVLEAIEGALEAGALAAFVGGAGPTLAALARAGEEAPVIRALSAYRGPEGRTLVLGIGEGYFWKET</sequence>
<keyword id="KW-0028">Amino-acid biosynthesis</keyword>
<keyword id="KW-0067">ATP-binding</keyword>
<keyword id="KW-0963">Cytoplasm</keyword>
<keyword id="KW-0418">Kinase</keyword>
<keyword id="KW-0547">Nucleotide-binding</keyword>
<keyword id="KW-1185">Reference proteome</keyword>
<keyword id="KW-0791">Threonine biosynthesis</keyword>
<keyword id="KW-0808">Transferase</keyword>
<name>KHSE_THET8</name>
<dbReference type="EC" id="2.7.1.39" evidence="1"/>
<dbReference type="EMBL" id="AP008226">
    <property type="protein sequence ID" value="BAD71217.1"/>
    <property type="molecule type" value="Genomic_DNA"/>
</dbReference>
<dbReference type="RefSeq" id="WP_011228648.1">
    <property type="nucleotide sequence ID" value="NC_006461.1"/>
</dbReference>
<dbReference type="RefSeq" id="YP_144660.1">
    <property type="nucleotide sequence ID" value="NC_006461.1"/>
</dbReference>
<dbReference type="SMR" id="Q5SIH5"/>
<dbReference type="EnsemblBacteria" id="BAD71217">
    <property type="protein sequence ID" value="BAD71217"/>
    <property type="gene ID" value="BAD71217"/>
</dbReference>
<dbReference type="GeneID" id="3168112"/>
<dbReference type="KEGG" id="ttj:TTHA1394"/>
<dbReference type="PATRIC" id="fig|300852.9.peg.1369"/>
<dbReference type="eggNOG" id="COG0083">
    <property type="taxonomic scope" value="Bacteria"/>
</dbReference>
<dbReference type="HOGENOM" id="CLU_041243_0_2_0"/>
<dbReference type="PhylomeDB" id="Q5SIH5"/>
<dbReference type="UniPathway" id="UPA00050">
    <property type="reaction ID" value="UER00064"/>
</dbReference>
<dbReference type="Proteomes" id="UP000000532">
    <property type="component" value="Chromosome"/>
</dbReference>
<dbReference type="GO" id="GO:0005737">
    <property type="term" value="C:cytoplasm"/>
    <property type="evidence" value="ECO:0007669"/>
    <property type="project" value="UniProtKB-SubCell"/>
</dbReference>
<dbReference type="GO" id="GO:0005524">
    <property type="term" value="F:ATP binding"/>
    <property type="evidence" value="ECO:0007669"/>
    <property type="project" value="UniProtKB-UniRule"/>
</dbReference>
<dbReference type="GO" id="GO:0004413">
    <property type="term" value="F:homoserine kinase activity"/>
    <property type="evidence" value="ECO:0007669"/>
    <property type="project" value="UniProtKB-UniRule"/>
</dbReference>
<dbReference type="GO" id="GO:0009088">
    <property type="term" value="P:threonine biosynthetic process"/>
    <property type="evidence" value="ECO:0007669"/>
    <property type="project" value="UniProtKB-UniRule"/>
</dbReference>
<dbReference type="Gene3D" id="3.30.230.10">
    <property type="match status" value="1"/>
</dbReference>
<dbReference type="Gene3D" id="3.30.70.890">
    <property type="entry name" value="GHMP kinase, C-terminal domain"/>
    <property type="match status" value="1"/>
</dbReference>
<dbReference type="HAMAP" id="MF_00384">
    <property type="entry name" value="Homoser_kinase"/>
    <property type="match status" value="1"/>
</dbReference>
<dbReference type="InterPro" id="IPR013750">
    <property type="entry name" value="GHMP_kinase_C_dom"/>
</dbReference>
<dbReference type="InterPro" id="IPR036554">
    <property type="entry name" value="GHMP_kinase_C_sf"/>
</dbReference>
<dbReference type="InterPro" id="IPR006204">
    <property type="entry name" value="GHMP_kinase_N_dom"/>
</dbReference>
<dbReference type="InterPro" id="IPR006203">
    <property type="entry name" value="GHMP_knse_ATP-bd_CS"/>
</dbReference>
<dbReference type="InterPro" id="IPR000870">
    <property type="entry name" value="Homoserine_kinase"/>
</dbReference>
<dbReference type="InterPro" id="IPR020568">
    <property type="entry name" value="Ribosomal_Su5_D2-typ_SF"/>
</dbReference>
<dbReference type="InterPro" id="IPR014721">
    <property type="entry name" value="Ribsml_uS5_D2-typ_fold_subgr"/>
</dbReference>
<dbReference type="NCBIfam" id="TIGR00191">
    <property type="entry name" value="thrB"/>
    <property type="match status" value="1"/>
</dbReference>
<dbReference type="PANTHER" id="PTHR20861:SF1">
    <property type="entry name" value="HOMOSERINE KINASE"/>
    <property type="match status" value="1"/>
</dbReference>
<dbReference type="PANTHER" id="PTHR20861">
    <property type="entry name" value="HOMOSERINE/4-DIPHOSPHOCYTIDYL-2-C-METHYL-D-ERYTHRITOL KINASE"/>
    <property type="match status" value="1"/>
</dbReference>
<dbReference type="Pfam" id="PF08544">
    <property type="entry name" value="GHMP_kinases_C"/>
    <property type="match status" value="1"/>
</dbReference>
<dbReference type="Pfam" id="PF00288">
    <property type="entry name" value="GHMP_kinases_N"/>
    <property type="match status" value="1"/>
</dbReference>
<dbReference type="PIRSF" id="PIRSF000676">
    <property type="entry name" value="Homoser_kin"/>
    <property type="match status" value="1"/>
</dbReference>
<dbReference type="PRINTS" id="PR00958">
    <property type="entry name" value="HOMSERKINASE"/>
</dbReference>
<dbReference type="SUPFAM" id="SSF55060">
    <property type="entry name" value="GHMP Kinase, C-terminal domain"/>
    <property type="match status" value="1"/>
</dbReference>
<dbReference type="SUPFAM" id="SSF54211">
    <property type="entry name" value="Ribosomal protein S5 domain 2-like"/>
    <property type="match status" value="1"/>
</dbReference>
<dbReference type="PROSITE" id="PS00627">
    <property type="entry name" value="GHMP_KINASES_ATP"/>
    <property type="match status" value="1"/>
</dbReference>